<name>MURG_HAEIN</name>
<sequence length="351" mass="38307">MKNKKLLVMAGGTGGHVFPAIAVAQTLQKQEWDICWLGTKDRMEAQLVPKYGIPIRFIQISGLRGKGIKALLNAPFAIFRAVLQAKKIIQEEKPDAVLGMGGYVSGPAGVAAKLCGVPIILHEQNAIAGLTNKLLGKIATCVLQAFPTAFPHAEVVGNPVREDLFEMPNPDIRFSDREEKLRVLVVGGSQGARVLNHTLPKVVAQLADKLEFRHQVGKGAVEEVSQLYGENLEQVKITEFIDNMAEAYAWADVVICRSGALTVCEIAAVGAAAIFVPFQHKDRQQYLNAKYLSDVGAAKIIEQADLTPEILVNYLKNLTRENLLQMALKAKTMSMPNAAQRVAEVIKQYSN</sequence>
<dbReference type="EC" id="2.4.1.227" evidence="1"/>
<dbReference type="EMBL" id="L42023">
    <property type="protein sequence ID" value="AAC22793.1"/>
    <property type="molecule type" value="Genomic_DNA"/>
</dbReference>
<dbReference type="PIR" id="D64185">
    <property type="entry name" value="D64185"/>
</dbReference>
<dbReference type="RefSeq" id="NP_439296.1">
    <property type="nucleotide sequence ID" value="NC_000907.1"/>
</dbReference>
<dbReference type="SMR" id="P45065"/>
<dbReference type="STRING" id="71421.HI_1138"/>
<dbReference type="CAZy" id="GT28">
    <property type="family name" value="Glycosyltransferase Family 28"/>
</dbReference>
<dbReference type="EnsemblBacteria" id="AAC22793">
    <property type="protein sequence ID" value="AAC22793"/>
    <property type="gene ID" value="HI_1138"/>
</dbReference>
<dbReference type="KEGG" id="hin:HI_1138"/>
<dbReference type="PATRIC" id="fig|71421.8.peg.1188"/>
<dbReference type="eggNOG" id="COG0707">
    <property type="taxonomic scope" value="Bacteria"/>
</dbReference>
<dbReference type="HOGENOM" id="CLU_037404_2_0_6"/>
<dbReference type="OrthoDB" id="9808936at2"/>
<dbReference type="PhylomeDB" id="P45065"/>
<dbReference type="BioCyc" id="HINF71421:G1GJ1-1171-MONOMER"/>
<dbReference type="UniPathway" id="UPA00219"/>
<dbReference type="Proteomes" id="UP000000579">
    <property type="component" value="Chromosome"/>
</dbReference>
<dbReference type="GO" id="GO:0005886">
    <property type="term" value="C:plasma membrane"/>
    <property type="evidence" value="ECO:0007669"/>
    <property type="project" value="UniProtKB-SubCell"/>
</dbReference>
<dbReference type="GO" id="GO:0051991">
    <property type="term" value="F:UDP-N-acetyl-D-glucosamine:N-acetylmuramoyl-L-alanyl-D-glutamyl-meso-2,6-diaminopimelyl-D-alanyl-D-alanine-diphosphoundecaprenol 4-beta-N-acetylglucosaminlytransferase activity"/>
    <property type="evidence" value="ECO:0007669"/>
    <property type="project" value="RHEA"/>
</dbReference>
<dbReference type="GO" id="GO:0050511">
    <property type="term" value="F:undecaprenyldiphospho-muramoylpentapeptide beta-N-acetylglucosaminyltransferase activity"/>
    <property type="evidence" value="ECO:0000318"/>
    <property type="project" value="GO_Central"/>
</dbReference>
<dbReference type="GO" id="GO:0005975">
    <property type="term" value="P:carbohydrate metabolic process"/>
    <property type="evidence" value="ECO:0007669"/>
    <property type="project" value="InterPro"/>
</dbReference>
<dbReference type="GO" id="GO:0051301">
    <property type="term" value="P:cell division"/>
    <property type="evidence" value="ECO:0007669"/>
    <property type="project" value="UniProtKB-KW"/>
</dbReference>
<dbReference type="GO" id="GO:0071555">
    <property type="term" value="P:cell wall organization"/>
    <property type="evidence" value="ECO:0007669"/>
    <property type="project" value="UniProtKB-KW"/>
</dbReference>
<dbReference type="GO" id="GO:0030259">
    <property type="term" value="P:lipid glycosylation"/>
    <property type="evidence" value="ECO:0007669"/>
    <property type="project" value="UniProtKB-UniRule"/>
</dbReference>
<dbReference type="GO" id="GO:0009252">
    <property type="term" value="P:peptidoglycan biosynthetic process"/>
    <property type="evidence" value="ECO:0007669"/>
    <property type="project" value="UniProtKB-UniRule"/>
</dbReference>
<dbReference type="GO" id="GO:0008360">
    <property type="term" value="P:regulation of cell shape"/>
    <property type="evidence" value="ECO:0007669"/>
    <property type="project" value="UniProtKB-KW"/>
</dbReference>
<dbReference type="CDD" id="cd03785">
    <property type="entry name" value="GT28_MurG"/>
    <property type="match status" value="1"/>
</dbReference>
<dbReference type="Gene3D" id="3.40.50.2000">
    <property type="entry name" value="Glycogen Phosphorylase B"/>
    <property type="match status" value="2"/>
</dbReference>
<dbReference type="HAMAP" id="MF_00033">
    <property type="entry name" value="MurG"/>
    <property type="match status" value="1"/>
</dbReference>
<dbReference type="InterPro" id="IPR006009">
    <property type="entry name" value="GlcNAc_MurG"/>
</dbReference>
<dbReference type="InterPro" id="IPR007235">
    <property type="entry name" value="Glyco_trans_28_C"/>
</dbReference>
<dbReference type="InterPro" id="IPR004276">
    <property type="entry name" value="GlycoTrans_28_N"/>
</dbReference>
<dbReference type="NCBIfam" id="TIGR01133">
    <property type="entry name" value="murG"/>
    <property type="match status" value="1"/>
</dbReference>
<dbReference type="PANTHER" id="PTHR21015:SF22">
    <property type="entry name" value="GLYCOSYLTRANSFERASE"/>
    <property type="match status" value="1"/>
</dbReference>
<dbReference type="PANTHER" id="PTHR21015">
    <property type="entry name" value="UDP-N-ACETYLGLUCOSAMINE--N-ACETYLMURAMYL-(PENTAPEPTIDE) PYROPHOSPHORYL-UNDECAPRENOL N-ACETYLGLUCOSAMINE TRANSFERASE 1"/>
    <property type="match status" value="1"/>
</dbReference>
<dbReference type="Pfam" id="PF04101">
    <property type="entry name" value="Glyco_tran_28_C"/>
    <property type="match status" value="1"/>
</dbReference>
<dbReference type="Pfam" id="PF03033">
    <property type="entry name" value="Glyco_transf_28"/>
    <property type="match status" value="1"/>
</dbReference>
<dbReference type="SUPFAM" id="SSF53756">
    <property type="entry name" value="UDP-Glycosyltransferase/glycogen phosphorylase"/>
    <property type="match status" value="1"/>
</dbReference>
<gene>
    <name evidence="1" type="primary">murG</name>
    <name type="ordered locus">HI_1138</name>
</gene>
<reference key="1">
    <citation type="journal article" date="1995" name="Science">
        <title>Whole-genome random sequencing and assembly of Haemophilus influenzae Rd.</title>
        <authorList>
            <person name="Fleischmann R.D."/>
            <person name="Adams M.D."/>
            <person name="White O."/>
            <person name="Clayton R.A."/>
            <person name="Kirkness E.F."/>
            <person name="Kerlavage A.R."/>
            <person name="Bult C.J."/>
            <person name="Tomb J.-F."/>
            <person name="Dougherty B.A."/>
            <person name="Merrick J.M."/>
            <person name="McKenney K."/>
            <person name="Sutton G.G."/>
            <person name="FitzHugh W."/>
            <person name="Fields C.A."/>
            <person name="Gocayne J.D."/>
            <person name="Scott J.D."/>
            <person name="Shirley R."/>
            <person name="Liu L.-I."/>
            <person name="Glodek A."/>
            <person name="Kelley J.M."/>
            <person name="Weidman J.F."/>
            <person name="Phillips C.A."/>
            <person name="Spriggs T."/>
            <person name="Hedblom E."/>
            <person name="Cotton M.D."/>
            <person name="Utterback T.R."/>
            <person name="Hanna M.C."/>
            <person name="Nguyen D.T."/>
            <person name="Saudek D.M."/>
            <person name="Brandon R.C."/>
            <person name="Fine L.D."/>
            <person name="Fritchman J.L."/>
            <person name="Fuhrmann J.L."/>
            <person name="Geoghagen N.S.M."/>
            <person name="Gnehm C.L."/>
            <person name="McDonald L.A."/>
            <person name="Small K.V."/>
            <person name="Fraser C.M."/>
            <person name="Smith H.O."/>
            <person name="Venter J.C."/>
        </authorList>
    </citation>
    <scope>NUCLEOTIDE SEQUENCE [LARGE SCALE GENOMIC DNA]</scope>
    <source>
        <strain>ATCC 51907 / DSM 11121 / KW20 / Rd</strain>
    </source>
</reference>
<protein>
    <recommendedName>
        <fullName evidence="1">UDP-N-acetylglucosamine--N-acetylmuramyl-(pentapeptide) pyrophosphoryl-undecaprenol N-acetylglucosamine transferase</fullName>
        <ecNumber evidence="1">2.4.1.227</ecNumber>
    </recommendedName>
    <alternativeName>
        <fullName evidence="1">Undecaprenyl-PP-MurNAc-pentapeptide-UDPGlcNAc GlcNAc transferase</fullName>
    </alternativeName>
</protein>
<evidence type="ECO:0000255" key="1">
    <source>
        <dbReference type="HAMAP-Rule" id="MF_00033"/>
    </source>
</evidence>
<feature type="chain" id="PRO_0000109177" description="UDP-N-acetylglucosamine--N-acetylmuramyl-(pentapeptide) pyrophosphoryl-undecaprenol N-acetylglucosamine transferase">
    <location>
        <begin position="1"/>
        <end position="351"/>
    </location>
</feature>
<feature type="binding site" evidence="1">
    <location>
        <begin position="13"/>
        <end position="15"/>
    </location>
    <ligand>
        <name>UDP-N-acetyl-alpha-D-glucosamine</name>
        <dbReference type="ChEBI" id="CHEBI:57705"/>
    </ligand>
</feature>
<feature type="binding site" evidence="1">
    <location>
        <position position="125"/>
    </location>
    <ligand>
        <name>UDP-N-acetyl-alpha-D-glucosamine</name>
        <dbReference type="ChEBI" id="CHEBI:57705"/>
    </ligand>
</feature>
<feature type="binding site" evidence="1">
    <location>
        <position position="161"/>
    </location>
    <ligand>
        <name>UDP-N-acetyl-alpha-D-glucosamine</name>
        <dbReference type="ChEBI" id="CHEBI:57705"/>
    </ligand>
</feature>
<feature type="binding site" evidence="1">
    <location>
        <position position="189"/>
    </location>
    <ligand>
        <name>UDP-N-acetyl-alpha-D-glucosamine</name>
        <dbReference type="ChEBI" id="CHEBI:57705"/>
    </ligand>
</feature>
<feature type="binding site" evidence="1">
    <location>
        <position position="241"/>
    </location>
    <ligand>
        <name>UDP-N-acetyl-alpha-D-glucosamine</name>
        <dbReference type="ChEBI" id="CHEBI:57705"/>
    </ligand>
</feature>
<feature type="binding site" evidence="1">
    <location>
        <begin position="260"/>
        <end position="265"/>
    </location>
    <ligand>
        <name>UDP-N-acetyl-alpha-D-glucosamine</name>
        <dbReference type="ChEBI" id="CHEBI:57705"/>
    </ligand>
</feature>
<feature type="binding site" evidence="1">
    <location>
        <position position="285"/>
    </location>
    <ligand>
        <name>UDP-N-acetyl-alpha-D-glucosamine</name>
        <dbReference type="ChEBI" id="CHEBI:57705"/>
    </ligand>
</feature>
<organism>
    <name type="scientific">Haemophilus influenzae (strain ATCC 51907 / DSM 11121 / KW20 / Rd)</name>
    <dbReference type="NCBI Taxonomy" id="71421"/>
    <lineage>
        <taxon>Bacteria</taxon>
        <taxon>Pseudomonadati</taxon>
        <taxon>Pseudomonadota</taxon>
        <taxon>Gammaproteobacteria</taxon>
        <taxon>Pasteurellales</taxon>
        <taxon>Pasteurellaceae</taxon>
        <taxon>Haemophilus</taxon>
    </lineage>
</organism>
<comment type="function">
    <text evidence="1">Cell wall formation. Catalyzes the transfer of a GlcNAc subunit on undecaprenyl-pyrophosphoryl-MurNAc-pentapeptide (lipid intermediate I) to form undecaprenyl-pyrophosphoryl-MurNAc-(pentapeptide)GlcNAc (lipid intermediate II).</text>
</comment>
<comment type="catalytic activity">
    <reaction evidence="1">
        <text>di-trans,octa-cis-undecaprenyl diphospho-N-acetyl-alpha-D-muramoyl-L-alanyl-D-glutamyl-meso-2,6-diaminopimeloyl-D-alanyl-D-alanine + UDP-N-acetyl-alpha-D-glucosamine = di-trans,octa-cis-undecaprenyl diphospho-[N-acetyl-alpha-D-glucosaminyl-(1-&gt;4)]-N-acetyl-alpha-D-muramoyl-L-alanyl-D-glutamyl-meso-2,6-diaminopimeloyl-D-alanyl-D-alanine + UDP + H(+)</text>
        <dbReference type="Rhea" id="RHEA:31227"/>
        <dbReference type="ChEBI" id="CHEBI:15378"/>
        <dbReference type="ChEBI" id="CHEBI:57705"/>
        <dbReference type="ChEBI" id="CHEBI:58223"/>
        <dbReference type="ChEBI" id="CHEBI:61387"/>
        <dbReference type="ChEBI" id="CHEBI:61388"/>
        <dbReference type="EC" id="2.4.1.227"/>
    </reaction>
</comment>
<comment type="pathway">
    <text evidence="1">Cell wall biogenesis; peptidoglycan biosynthesis.</text>
</comment>
<comment type="subcellular location">
    <subcellularLocation>
        <location evidence="1">Cell inner membrane</location>
        <topology evidence="1">Peripheral membrane protein</topology>
        <orientation evidence="1">Cytoplasmic side</orientation>
    </subcellularLocation>
</comment>
<comment type="similarity">
    <text evidence="1">Belongs to the glycosyltransferase 28 family. MurG subfamily.</text>
</comment>
<keyword id="KW-0131">Cell cycle</keyword>
<keyword id="KW-0132">Cell division</keyword>
<keyword id="KW-0997">Cell inner membrane</keyword>
<keyword id="KW-1003">Cell membrane</keyword>
<keyword id="KW-0133">Cell shape</keyword>
<keyword id="KW-0961">Cell wall biogenesis/degradation</keyword>
<keyword id="KW-0328">Glycosyltransferase</keyword>
<keyword id="KW-0472">Membrane</keyword>
<keyword id="KW-0573">Peptidoglycan synthesis</keyword>
<keyword id="KW-1185">Reference proteome</keyword>
<keyword id="KW-0808">Transferase</keyword>
<accession>P45065</accession>
<proteinExistence type="inferred from homology"/>